<organism>
    <name type="scientific">Rhizobium leguminosarum bv. trifolii (strain WSM2304)</name>
    <dbReference type="NCBI Taxonomy" id="395492"/>
    <lineage>
        <taxon>Bacteria</taxon>
        <taxon>Pseudomonadati</taxon>
        <taxon>Pseudomonadota</taxon>
        <taxon>Alphaproteobacteria</taxon>
        <taxon>Hyphomicrobiales</taxon>
        <taxon>Rhizobiaceae</taxon>
        <taxon>Rhizobium/Agrobacterium group</taxon>
        <taxon>Rhizobium</taxon>
    </lineage>
</organism>
<dbReference type="EC" id="4.1.1.65" evidence="1"/>
<dbReference type="EMBL" id="CP001191">
    <property type="protein sequence ID" value="ACI54316.1"/>
    <property type="molecule type" value="Genomic_DNA"/>
</dbReference>
<dbReference type="STRING" id="395492.Rleg2_1022"/>
<dbReference type="KEGG" id="rlt:Rleg2_1022"/>
<dbReference type="eggNOG" id="COG0688">
    <property type="taxonomic scope" value="Bacteria"/>
</dbReference>
<dbReference type="HOGENOM" id="CLU_072492_0_0_5"/>
<dbReference type="UniPathway" id="UPA00558">
    <property type="reaction ID" value="UER00616"/>
</dbReference>
<dbReference type="Proteomes" id="UP000008330">
    <property type="component" value="Chromosome"/>
</dbReference>
<dbReference type="GO" id="GO:0005886">
    <property type="term" value="C:plasma membrane"/>
    <property type="evidence" value="ECO:0007669"/>
    <property type="project" value="UniProtKB-SubCell"/>
</dbReference>
<dbReference type="GO" id="GO:0004609">
    <property type="term" value="F:phosphatidylserine decarboxylase activity"/>
    <property type="evidence" value="ECO:0007669"/>
    <property type="project" value="UniProtKB-UniRule"/>
</dbReference>
<dbReference type="GO" id="GO:0006646">
    <property type="term" value="P:phosphatidylethanolamine biosynthetic process"/>
    <property type="evidence" value="ECO:0007669"/>
    <property type="project" value="UniProtKB-UniRule"/>
</dbReference>
<dbReference type="HAMAP" id="MF_00664">
    <property type="entry name" value="PS_decarb_PSD_A"/>
    <property type="match status" value="1"/>
</dbReference>
<dbReference type="InterPro" id="IPR003817">
    <property type="entry name" value="PS_Dcarbxylase"/>
</dbReference>
<dbReference type="InterPro" id="IPR033175">
    <property type="entry name" value="PSD-A"/>
</dbReference>
<dbReference type="NCBIfam" id="NF003677">
    <property type="entry name" value="PRK05305.1-1"/>
    <property type="match status" value="1"/>
</dbReference>
<dbReference type="NCBIfam" id="NF003678">
    <property type="entry name" value="PRK05305.1-2"/>
    <property type="match status" value="1"/>
</dbReference>
<dbReference type="NCBIfam" id="NF003679">
    <property type="entry name" value="PRK05305.1-3"/>
    <property type="match status" value="1"/>
</dbReference>
<dbReference type="NCBIfam" id="NF003685">
    <property type="entry name" value="PRK05305.2-5"/>
    <property type="match status" value="1"/>
</dbReference>
<dbReference type="PANTHER" id="PTHR35809">
    <property type="entry name" value="ARCHAETIDYLSERINE DECARBOXYLASE PROENZYME-RELATED"/>
    <property type="match status" value="1"/>
</dbReference>
<dbReference type="PANTHER" id="PTHR35809:SF1">
    <property type="entry name" value="ARCHAETIDYLSERINE DECARBOXYLASE PROENZYME-RELATED"/>
    <property type="match status" value="1"/>
</dbReference>
<dbReference type="Pfam" id="PF02666">
    <property type="entry name" value="PS_Dcarbxylase"/>
    <property type="match status" value="1"/>
</dbReference>
<sequence>MSLFNTVRKTIVPVHKEGYPFVAAFFVASLILGWIFKPLFWIGMIFTLWCAYFFRDPERVTPQDDDLVISPADGKVSAIQMVTPPAELDLGSEPMLRISVFMNVFNCHVNRAPMRGRIVSINYRSGSFVNAELDKASEDNERNGLVIETRHGQIGVVQIAGLVARRILCWANPNEPVDAGERFGLIRFGSRLDVFLPAGAAPRVSLGQVAIAGETVIAEFASTKGPIISRRS</sequence>
<evidence type="ECO:0000255" key="1">
    <source>
        <dbReference type="HAMAP-Rule" id="MF_00664"/>
    </source>
</evidence>
<reference key="1">
    <citation type="journal article" date="2010" name="Stand. Genomic Sci.">
        <title>Complete genome sequence of Rhizobium leguminosarum bv trifolii strain WSM2304, an effective microsymbiont of the South American clover Trifolium polymorphum.</title>
        <authorList>
            <person name="Reeve W."/>
            <person name="O'Hara G."/>
            <person name="Chain P."/>
            <person name="Ardley J."/>
            <person name="Brau L."/>
            <person name="Nandesena K."/>
            <person name="Tiwari R."/>
            <person name="Malfatti S."/>
            <person name="Kiss H."/>
            <person name="Lapidus A."/>
            <person name="Copeland A."/>
            <person name="Nolan M."/>
            <person name="Land M."/>
            <person name="Ivanova N."/>
            <person name="Mavromatis K."/>
            <person name="Markowitz V."/>
            <person name="Kyrpides N."/>
            <person name="Melino V."/>
            <person name="Denton M."/>
            <person name="Yates R."/>
            <person name="Howieson J."/>
        </authorList>
    </citation>
    <scope>NUCLEOTIDE SEQUENCE [LARGE SCALE GENOMIC DNA]</scope>
    <source>
        <strain>WSM2304</strain>
    </source>
</reference>
<feature type="chain" id="PRO_1000131488" description="Phosphatidylserine decarboxylase beta chain" evidence="1">
    <location>
        <begin position="1"/>
        <end position="189"/>
    </location>
</feature>
<feature type="chain" id="PRO_1000131489" description="Phosphatidylserine decarboxylase alpha chain" evidence="1">
    <location>
        <begin position="190"/>
        <end position="232"/>
    </location>
</feature>
<feature type="active site" description="Schiff-base intermediate with substrate; via pyruvic acid" evidence="1">
    <location>
        <position position="190"/>
    </location>
</feature>
<feature type="site" description="Cleavage (non-hydrolytic); by autocatalysis" evidence="1">
    <location>
        <begin position="189"/>
        <end position="190"/>
    </location>
</feature>
<feature type="modified residue" description="Pyruvic acid (Ser); by autocatalysis" evidence="1">
    <location>
        <position position="190"/>
    </location>
</feature>
<proteinExistence type="inferred from homology"/>
<accession>B5ZW97</accession>
<keyword id="KW-1003">Cell membrane</keyword>
<keyword id="KW-0210">Decarboxylase</keyword>
<keyword id="KW-0444">Lipid biosynthesis</keyword>
<keyword id="KW-0443">Lipid metabolism</keyword>
<keyword id="KW-0456">Lyase</keyword>
<keyword id="KW-0472">Membrane</keyword>
<keyword id="KW-0594">Phospholipid biosynthesis</keyword>
<keyword id="KW-1208">Phospholipid metabolism</keyword>
<keyword id="KW-0670">Pyruvate</keyword>
<keyword id="KW-1185">Reference proteome</keyword>
<keyword id="KW-0865">Zymogen</keyword>
<name>PSD_RHILW</name>
<gene>
    <name evidence="1" type="primary">psd</name>
    <name type="ordered locus">Rleg2_1022</name>
</gene>
<protein>
    <recommendedName>
        <fullName evidence="1">Phosphatidylserine decarboxylase proenzyme</fullName>
        <ecNumber evidence="1">4.1.1.65</ecNumber>
    </recommendedName>
    <component>
        <recommendedName>
            <fullName evidence="1">Phosphatidylserine decarboxylase alpha chain</fullName>
        </recommendedName>
    </component>
    <component>
        <recommendedName>
            <fullName evidence="1">Phosphatidylserine decarboxylase beta chain</fullName>
        </recommendedName>
    </component>
</protein>
<comment type="function">
    <text evidence="1">Catalyzes the formation of phosphatidylethanolamine (PtdEtn) from phosphatidylserine (PtdSer).</text>
</comment>
<comment type="catalytic activity">
    <reaction evidence="1">
        <text>a 1,2-diacyl-sn-glycero-3-phospho-L-serine + H(+) = a 1,2-diacyl-sn-glycero-3-phosphoethanolamine + CO2</text>
        <dbReference type="Rhea" id="RHEA:20828"/>
        <dbReference type="ChEBI" id="CHEBI:15378"/>
        <dbReference type="ChEBI" id="CHEBI:16526"/>
        <dbReference type="ChEBI" id="CHEBI:57262"/>
        <dbReference type="ChEBI" id="CHEBI:64612"/>
        <dbReference type="EC" id="4.1.1.65"/>
    </reaction>
</comment>
<comment type="cofactor">
    <cofactor evidence="1">
        <name>pyruvate</name>
        <dbReference type="ChEBI" id="CHEBI:15361"/>
    </cofactor>
    <text evidence="1">Binds 1 pyruvoyl group covalently per subunit.</text>
</comment>
<comment type="pathway">
    <text evidence="1">Phospholipid metabolism; phosphatidylethanolamine biosynthesis; phosphatidylethanolamine from CDP-diacylglycerol: step 2/2.</text>
</comment>
<comment type="subunit">
    <text evidence="1">Heterodimer of a large membrane-associated beta subunit and a small pyruvoyl-containing alpha subunit.</text>
</comment>
<comment type="subcellular location">
    <subcellularLocation>
        <location evidence="1">Cell membrane</location>
        <topology evidence="1">Peripheral membrane protein</topology>
    </subcellularLocation>
</comment>
<comment type="PTM">
    <text evidence="1">Is synthesized initially as an inactive proenzyme. Formation of the active enzyme involves a self-maturation process in which the active site pyruvoyl group is generated from an internal serine residue via an autocatalytic post-translational modification. Two non-identical subunits are generated from the proenzyme in this reaction, and the pyruvate is formed at the N-terminus of the alpha chain, which is derived from the carboxyl end of the proenzyme. The post-translation cleavage follows an unusual pathway, termed non-hydrolytic serinolysis, in which the side chain hydroxyl group of the serine supplies its oxygen atom to form the C-terminus of the beta chain, while the remainder of the serine residue undergoes an oxidative deamination to produce ammonia and the pyruvoyl prosthetic group on the alpha chain.</text>
</comment>
<comment type="similarity">
    <text evidence="1">Belongs to the phosphatidylserine decarboxylase family. PSD-A subfamily.</text>
</comment>